<reference key="1">
    <citation type="submission" date="2006-05" db="EMBL/GenBank/DDBJ databases">
        <authorList>
            <consortium name="Genoscope"/>
        </authorList>
    </citation>
    <scope>NUCLEOTIDE SEQUENCE [LARGE SCALE GENOMIC DNA]</scope>
    <source>
        <strain>WH7803</strain>
    </source>
</reference>
<keyword id="KW-1185">Reference proteome</keyword>
<keyword id="KW-0687">Ribonucleoprotein</keyword>
<keyword id="KW-0689">Ribosomal protein</keyword>
<accession>A5GIR9</accession>
<organism>
    <name type="scientific">Synechococcus sp. (strain WH7803)</name>
    <dbReference type="NCBI Taxonomy" id="32051"/>
    <lineage>
        <taxon>Bacteria</taxon>
        <taxon>Bacillati</taxon>
        <taxon>Cyanobacteriota</taxon>
        <taxon>Cyanophyceae</taxon>
        <taxon>Synechococcales</taxon>
        <taxon>Synechococcaceae</taxon>
        <taxon>Synechococcus</taxon>
    </lineage>
</organism>
<feature type="chain" id="PRO_1000055482" description="Large ribosomal subunit protein uL13">
    <location>
        <begin position="1"/>
        <end position="150"/>
    </location>
</feature>
<feature type="region of interest" description="Disordered" evidence="2">
    <location>
        <begin position="129"/>
        <end position="150"/>
    </location>
</feature>
<evidence type="ECO:0000255" key="1">
    <source>
        <dbReference type="HAMAP-Rule" id="MF_01366"/>
    </source>
</evidence>
<evidence type="ECO:0000256" key="2">
    <source>
        <dbReference type="SAM" id="MobiDB-lite"/>
    </source>
</evidence>
<evidence type="ECO:0000305" key="3"/>
<comment type="function">
    <text evidence="1">This protein is one of the early assembly proteins of the 50S ribosomal subunit, although it is not seen to bind rRNA by itself. It is important during the early stages of 50S assembly.</text>
</comment>
<comment type="subunit">
    <text evidence="1">Part of the 50S ribosomal subunit.</text>
</comment>
<comment type="similarity">
    <text evidence="1">Belongs to the universal ribosomal protein uL13 family.</text>
</comment>
<gene>
    <name evidence="1" type="primary">rplM</name>
    <name evidence="1" type="synonym">rpl13</name>
    <name type="ordered locus">SynWH7803_0408</name>
</gene>
<protein>
    <recommendedName>
        <fullName evidence="1">Large ribosomal subunit protein uL13</fullName>
    </recommendedName>
    <alternativeName>
        <fullName evidence="3">50S ribosomal protein L13</fullName>
    </alternativeName>
</protein>
<name>RL13_SYNPW</name>
<dbReference type="EMBL" id="CT971583">
    <property type="protein sequence ID" value="CAK22834.1"/>
    <property type="molecule type" value="Genomic_DNA"/>
</dbReference>
<dbReference type="SMR" id="A5GIR9"/>
<dbReference type="STRING" id="32051.SynWH7803_0408"/>
<dbReference type="KEGG" id="syx:SynWH7803_0408"/>
<dbReference type="eggNOG" id="COG0102">
    <property type="taxonomic scope" value="Bacteria"/>
</dbReference>
<dbReference type="HOGENOM" id="CLU_082184_2_2_3"/>
<dbReference type="OrthoDB" id="9801330at2"/>
<dbReference type="Proteomes" id="UP000001566">
    <property type="component" value="Chromosome"/>
</dbReference>
<dbReference type="GO" id="GO:0022625">
    <property type="term" value="C:cytosolic large ribosomal subunit"/>
    <property type="evidence" value="ECO:0007669"/>
    <property type="project" value="TreeGrafter"/>
</dbReference>
<dbReference type="GO" id="GO:0003729">
    <property type="term" value="F:mRNA binding"/>
    <property type="evidence" value="ECO:0007669"/>
    <property type="project" value="TreeGrafter"/>
</dbReference>
<dbReference type="GO" id="GO:0003735">
    <property type="term" value="F:structural constituent of ribosome"/>
    <property type="evidence" value="ECO:0007669"/>
    <property type="project" value="InterPro"/>
</dbReference>
<dbReference type="GO" id="GO:0017148">
    <property type="term" value="P:negative regulation of translation"/>
    <property type="evidence" value="ECO:0007669"/>
    <property type="project" value="TreeGrafter"/>
</dbReference>
<dbReference type="GO" id="GO:0006412">
    <property type="term" value="P:translation"/>
    <property type="evidence" value="ECO:0007669"/>
    <property type="project" value="UniProtKB-UniRule"/>
</dbReference>
<dbReference type="CDD" id="cd00392">
    <property type="entry name" value="Ribosomal_L13"/>
    <property type="match status" value="1"/>
</dbReference>
<dbReference type="FunFam" id="3.90.1180.10:FF:000001">
    <property type="entry name" value="50S ribosomal protein L13"/>
    <property type="match status" value="1"/>
</dbReference>
<dbReference type="Gene3D" id="3.90.1180.10">
    <property type="entry name" value="Ribosomal protein L13"/>
    <property type="match status" value="1"/>
</dbReference>
<dbReference type="HAMAP" id="MF_01366">
    <property type="entry name" value="Ribosomal_uL13"/>
    <property type="match status" value="1"/>
</dbReference>
<dbReference type="InterPro" id="IPR005822">
    <property type="entry name" value="Ribosomal_uL13"/>
</dbReference>
<dbReference type="InterPro" id="IPR005823">
    <property type="entry name" value="Ribosomal_uL13_bac-type"/>
</dbReference>
<dbReference type="InterPro" id="IPR023563">
    <property type="entry name" value="Ribosomal_uL13_CS"/>
</dbReference>
<dbReference type="InterPro" id="IPR036899">
    <property type="entry name" value="Ribosomal_uL13_sf"/>
</dbReference>
<dbReference type="NCBIfam" id="TIGR01066">
    <property type="entry name" value="rplM_bact"/>
    <property type="match status" value="1"/>
</dbReference>
<dbReference type="PANTHER" id="PTHR11545:SF2">
    <property type="entry name" value="LARGE RIBOSOMAL SUBUNIT PROTEIN UL13M"/>
    <property type="match status" value="1"/>
</dbReference>
<dbReference type="PANTHER" id="PTHR11545">
    <property type="entry name" value="RIBOSOMAL PROTEIN L13"/>
    <property type="match status" value="1"/>
</dbReference>
<dbReference type="Pfam" id="PF00572">
    <property type="entry name" value="Ribosomal_L13"/>
    <property type="match status" value="1"/>
</dbReference>
<dbReference type="PIRSF" id="PIRSF002181">
    <property type="entry name" value="Ribosomal_L13"/>
    <property type="match status" value="1"/>
</dbReference>
<dbReference type="SUPFAM" id="SSF52161">
    <property type="entry name" value="Ribosomal protein L13"/>
    <property type="match status" value="1"/>
</dbReference>
<dbReference type="PROSITE" id="PS00783">
    <property type="entry name" value="RIBOSOMAL_L13"/>
    <property type="match status" value="1"/>
</dbReference>
<proteinExistence type="inferred from homology"/>
<sequence length="150" mass="16800">MNKTSVPSIDSIDRQWYLVDAENQTLGRLATEVASVLRGKNKASFTPHLDTGDFVVVVNADKIRVSGNKPQQKLYRRHSGRPGGMKVETFTHLQERLPERIVEKAIKGMLPHNALGRQMFRKLKVYKGAEHPHAAQQPKPLQLDPAATAQ</sequence>